<protein>
    <recommendedName>
        <fullName evidence="1">Thymidine kinase</fullName>
        <ecNumber evidence="1">2.7.1.21</ecNumber>
    </recommendedName>
</protein>
<comment type="catalytic activity">
    <reaction evidence="1">
        <text>thymidine + ATP = dTMP + ADP + H(+)</text>
        <dbReference type="Rhea" id="RHEA:19129"/>
        <dbReference type="ChEBI" id="CHEBI:15378"/>
        <dbReference type="ChEBI" id="CHEBI:17748"/>
        <dbReference type="ChEBI" id="CHEBI:30616"/>
        <dbReference type="ChEBI" id="CHEBI:63528"/>
        <dbReference type="ChEBI" id="CHEBI:456216"/>
        <dbReference type="EC" id="2.7.1.21"/>
    </reaction>
</comment>
<comment type="subunit">
    <text evidence="1">Homotetramer.</text>
</comment>
<comment type="subcellular location">
    <subcellularLocation>
        <location evidence="1">Cytoplasm</location>
    </subcellularLocation>
</comment>
<comment type="similarity">
    <text evidence="1">Belongs to the thymidine kinase family.</text>
</comment>
<name>KITH_HALWD</name>
<accession>Q18J88</accession>
<evidence type="ECO:0000255" key="1">
    <source>
        <dbReference type="HAMAP-Rule" id="MF_00124"/>
    </source>
</evidence>
<evidence type="ECO:0000256" key="2">
    <source>
        <dbReference type="SAM" id="MobiDB-lite"/>
    </source>
</evidence>
<keyword id="KW-0067">ATP-binding</keyword>
<keyword id="KW-0963">Cytoplasm</keyword>
<keyword id="KW-0237">DNA synthesis</keyword>
<keyword id="KW-0418">Kinase</keyword>
<keyword id="KW-0479">Metal-binding</keyword>
<keyword id="KW-0547">Nucleotide-binding</keyword>
<keyword id="KW-1185">Reference proteome</keyword>
<keyword id="KW-0808">Transferase</keyword>
<keyword id="KW-0862">Zinc</keyword>
<gene>
    <name evidence="1" type="primary">tdk</name>
    <name type="ordered locus">HQ_1795A</name>
</gene>
<reference key="1">
    <citation type="journal article" date="2006" name="BMC Genomics">
        <title>The genome of the square archaeon Haloquadratum walsbyi: life at the limits of water activity.</title>
        <authorList>
            <person name="Bolhuis H."/>
            <person name="Palm P."/>
            <person name="Wende A."/>
            <person name="Falb M."/>
            <person name="Rampp M."/>
            <person name="Rodriguez-Valera F."/>
            <person name="Pfeiffer F."/>
            <person name="Oesterhelt D."/>
        </authorList>
    </citation>
    <scope>NUCLEOTIDE SEQUENCE [LARGE SCALE GENOMIC DNA]</scope>
    <source>
        <strain>DSM 16790 / HBSQ001</strain>
    </source>
</reference>
<dbReference type="EC" id="2.7.1.21" evidence="1"/>
<dbReference type="EMBL" id="AM180088">
    <property type="protein sequence ID" value="CAJ51923.1"/>
    <property type="molecule type" value="Genomic_DNA"/>
</dbReference>
<dbReference type="RefSeq" id="WP_011571070.1">
    <property type="nucleotide sequence ID" value="NC_008212.1"/>
</dbReference>
<dbReference type="SMR" id="Q18J88"/>
<dbReference type="STRING" id="362976.HQ_1795A"/>
<dbReference type="GeneID" id="4194746"/>
<dbReference type="KEGG" id="hwa:HQ_1795A"/>
<dbReference type="eggNOG" id="arCOG04798">
    <property type="taxonomic scope" value="Archaea"/>
</dbReference>
<dbReference type="HOGENOM" id="CLU_064400_3_0_2"/>
<dbReference type="Proteomes" id="UP000001975">
    <property type="component" value="Chromosome"/>
</dbReference>
<dbReference type="GO" id="GO:0005737">
    <property type="term" value="C:cytoplasm"/>
    <property type="evidence" value="ECO:0007669"/>
    <property type="project" value="UniProtKB-SubCell"/>
</dbReference>
<dbReference type="GO" id="GO:0005524">
    <property type="term" value="F:ATP binding"/>
    <property type="evidence" value="ECO:0007669"/>
    <property type="project" value="UniProtKB-UniRule"/>
</dbReference>
<dbReference type="GO" id="GO:0004797">
    <property type="term" value="F:thymidine kinase activity"/>
    <property type="evidence" value="ECO:0007669"/>
    <property type="project" value="UniProtKB-UniRule"/>
</dbReference>
<dbReference type="GO" id="GO:0008270">
    <property type="term" value="F:zinc ion binding"/>
    <property type="evidence" value="ECO:0007669"/>
    <property type="project" value="UniProtKB-UniRule"/>
</dbReference>
<dbReference type="GO" id="GO:0071897">
    <property type="term" value="P:DNA biosynthetic process"/>
    <property type="evidence" value="ECO:0007669"/>
    <property type="project" value="UniProtKB-KW"/>
</dbReference>
<dbReference type="GO" id="GO:0046104">
    <property type="term" value="P:thymidine metabolic process"/>
    <property type="evidence" value="ECO:0007669"/>
    <property type="project" value="TreeGrafter"/>
</dbReference>
<dbReference type="Gene3D" id="3.30.60.20">
    <property type="match status" value="1"/>
</dbReference>
<dbReference type="Gene3D" id="3.40.50.300">
    <property type="entry name" value="P-loop containing nucleotide triphosphate hydrolases"/>
    <property type="match status" value="1"/>
</dbReference>
<dbReference type="HAMAP" id="MF_00124">
    <property type="entry name" value="Thymidine_kinase"/>
    <property type="match status" value="1"/>
</dbReference>
<dbReference type="InterPro" id="IPR027417">
    <property type="entry name" value="P-loop_NTPase"/>
</dbReference>
<dbReference type="InterPro" id="IPR001267">
    <property type="entry name" value="Thymidine_kinase"/>
</dbReference>
<dbReference type="InterPro" id="IPR020633">
    <property type="entry name" value="Thymidine_kinase_CS"/>
</dbReference>
<dbReference type="NCBIfam" id="NF003296">
    <property type="entry name" value="PRK04296.1-1"/>
    <property type="match status" value="1"/>
</dbReference>
<dbReference type="PANTHER" id="PTHR11441">
    <property type="entry name" value="THYMIDINE KINASE"/>
    <property type="match status" value="1"/>
</dbReference>
<dbReference type="PANTHER" id="PTHR11441:SF0">
    <property type="entry name" value="THYMIDINE KINASE, CYTOSOLIC"/>
    <property type="match status" value="1"/>
</dbReference>
<dbReference type="Pfam" id="PF00265">
    <property type="entry name" value="TK"/>
    <property type="match status" value="2"/>
</dbReference>
<dbReference type="PIRSF" id="PIRSF035805">
    <property type="entry name" value="TK_cell"/>
    <property type="match status" value="1"/>
</dbReference>
<dbReference type="SUPFAM" id="SSF57716">
    <property type="entry name" value="Glucocorticoid receptor-like (DNA-binding domain)"/>
    <property type="match status" value="1"/>
</dbReference>
<dbReference type="SUPFAM" id="SSF52540">
    <property type="entry name" value="P-loop containing nucleoside triphosphate hydrolases"/>
    <property type="match status" value="1"/>
</dbReference>
<dbReference type="PROSITE" id="PS00603">
    <property type="entry name" value="TK_CELLULAR_TYPE"/>
    <property type="match status" value="1"/>
</dbReference>
<sequence length="225" mass="24833">MRAITNSGWIEVVTGSMFSGKTEELLRRLRRAEIAGQSIAVFKPAVDDRYGETTVGSHVGRQWEAAVVPNEGEDIWNIKHELSKKKQNHRTTTQCRSGDGTNNPGGVIPSNDDSVDVVAIDEANFFSTELVSVCESLANDGYRVVVSGTDQTYRGEPFEPLPQLMAVAEYVDKLQAICTQCGEPATRNQRLVDDSPAHIDDPTIVVGADETYEARCRNCHILRHE</sequence>
<feature type="chain" id="PRO_1000018156" description="Thymidine kinase">
    <location>
        <begin position="1"/>
        <end position="225"/>
    </location>
</feature>
<feature type="region of interest" description="Disordered" evidence="2">
    <location>
        <begin position="85"/>
        <end position="110"/>
    </location>
</feature>
<feature type="compositionally biased region" description="Polar residues" evidence="2">
    <location>
        <begin position="90"/>
        <end position="104"/>
    </location>
</feature>
<feature type="active site" description="Proton acceptor" evidence="1">
    <location>
        <position position="122"/>
    </location>
</feature>
<feature type="binding site" evidence="1">
    <location>
        <begin position="15"/>
        <end position="22"/>
    </location>
    <ligand>
        <name>ATP</name>
        <dbReference type="ChEBI" id="CHEBI:30616"/>
    </ligand>
</feature>
<feature type="binding site" evidence="1">
    <location>
        <begin position="121"/>
        <end position="124"/>
    </location>
    <ligand>
        <name>ATP</name>
        <dbReference type="ChEBI" id="CHEBI:30616"/>
    </ligand>
</feature>
<feature type="binding site" evidence="1">
    <location>
        <position position="178"/>
    </location>
    <ligand>
        <name>Zn(2+)</name>
        <dbReference type="ChEBI" id="CHEBI:29105"/>
    </ligand>
</feature>
<feature type="binding site" evidence="1">
    <location>
        <position position="181"/>
    </location>
    <ligand>
        <name>Zn(2+)</name>
        <dbReference type="ChEBI" id="CHEBI:29105"/>
    </ligand>
</feature>
<feature type="binding site" evidence="1">
    <location>
        <position position="216"/>
    </location>
    <ligand>
        <name>Zn(2+)</name>
        <dbReference type="ChEBI" id="CHEBI:29105"/>
    </ligand>
</feature>
<feature type="binding site" evidence="1">
    <location>
        <position position="219"/>
    </location>
    <ligand>
        <name>Zn(2+)</name>
        <dbReference type="ChEBI" id="CHEBI:29105"/>
    </ligand>
</feature>
<proteinExistence type="inferred from homology"/>
<organism>
    <name type="scientific">Haloquadratum walsbyi (strain DSM 16790 / HBSQ001)</name>
    <dbReference type="NCBI Taxonomy" id="362976"/>
    <lineage>
        <taxon>Archaea</taxon>
        <taxon>Methanobacteriati</taxon>
        <taxon>Methanobacteriota</taxon>
        <taxon>Stenosarchaea group</taxon>
        <taxon>Halobacteria</taxon>
        <taxon>Halobacteriales</taxon>
        <taxon>Haloferacaceae</taxon>
        <taxon>Haloquadratum</taxon>
    </lineage>
</organism>